<sequence>MSRHQFDLIMCLKQPGVQTGLLCEKCDGKCPICDSYVRPKRKVRVCENCSFGKQAKNCIICNLNVGVNDAFYCWECCRLGKDKDGCPRILNLGSNRLDRHFEKKKKV</sequence>
<proteinExistence type="evidence at protein level"/>
<protein>
    <recommendedName>
        <fullName>Pre-mRNA-splicing factor RDS3</fullName>
    </recommendedName>
    <alternativeName>
        <fullName>Regulator of drug sensitivity 3</fullName>
    </alternativeName>
</protein>
<comment type="function">
    <text evidence="1 2">Required for pre-mRNA splicing. Involved in regulation of drug sensitivity and may play a role in multidrug resistance.</text>
</comment>
<comment type="subunit">
    <text evidence="2">Component of the spliceosome where it interacts with CUS1, HSH49, HSH155, IST3 and RSE1. Also interacts with YRA1.</text>
</comment>
<comment type="subcellular location">
    <subcellularLocation>
        <location evidence="2">Nucleus</location>
    </subcellularLocation>
</comment>
<comment type="similarity">
    <text evidence="3">Belongs to the PHF5 family.</text>
</comment>
<reference key="1">
    <citation type="journal article" date="1997" name="Nature">
        <title>The nucleotide sequence of Saccharomyces cerevisiae chromosome XVI.</title>
        <authorList>
            <person name="Bussey H."/>
            <person name="Storms R.K."/>
            <person name="Ahmed A."/>
            <person name="Albermann K."/>
            <person name="Allen E."/>
            <person name="Ansorge W."/>
            <person name="Araujo R."/>
            <person name="Aparicio A."/>
            <person name="Barrell B.G."/>
            <person name="Badcock K."/>
            <person name="Benes V."/>
            <person name="Botstein D."/>
            <person name="Bowman S."/>
            <person name="Brueckner M."/>
            <person name="Carpenter J."/>
            <person name="Cherry J.M."/>
            <person name="Chung E."/>
            <person name="Churcher C.M."/>
            <person name="Coster F."/>
            <person name="Davis K."/>
            <person name="Davis R.W."/>
            <person name="Dietrich F.S."/>
            <person name="Delius H."/>
            <person name="DiPaolo T."/>
            <person name="Dubois E."/>
            <person name="Duesterhoeft A."/>
            <person name="Duncan M."/>
            <person name="Floeth M."/>
            <person name="Fortin N."/>
            <person name="Friesen J.D."/>
            <person name="Fritz C."/>
            <person name="Goffeau A."/>
            <person name="Hall J."/>
            <person name="Hebling U."/>
            <person name="Heumann K."/>
            <person name="Hilbert H."/>
            <person name="Hillier L.W."/>
            <person name="Hunicke-Smith S."/>
            <person name="Hyman R.W."/>
            <person name="Johnston M."/>
            <person name="Kalman S."/>
            <person name="Kleine K."/>
            <person name="Komp C."/>
            <person name="Kurdi O."/>
            <person name="Lashkari D."/>
            <person name="Lew H."/>
            <person name="Lin A."/>
            <person name="Lin D."/>
            <person name="Louis E.J."/>
            <person name="Marathe R."/>
            <person name="Messenguy F."/>
            <person name="Mewes H.-W."/>
            <person name="Mirtipati S."/>
            <person name="Moestl D."/>
            <person name="Mueller-Auer S."/>
            <person name="Namath A."/>
            <person name="Nentwich U."/>
            <person name="Oefner P."/>
            <person name="Pearson D."/>
            <person name="Petel F.X."/>
            <person name="Pohl T.M."/>
            <person name="Purnelle B."/>
            <person name="Rajandream M.A."/>
            <person name="Rechmann S."/>
            <person name="Rieger M."/>
            <person name="Riles L."/>
            <person name="Roberts D."/>
            <person name="Schaefer M."/>
            <person name="Scharfe M."/>
            <person name="Scherens B."/>
            <person name="Schramm S."/>
            <person name="Schroeder M."/>
            <person name="Sdicu A.-M."/>
            <person name="Tettelin H."/>
            <person name="Urrestarazu L.A."/>
            <person name="Ushinsky S."/>
            <person name="Vierendeels F."/>
            <person name="Vissers S."/>
            <person name="Voss H."/>
            <person name="Walsh S.V."/>
            <person name="Wambutt R."/>
            <person name="Wang Y."/>
            <person name="Wedler E."/>
            <person name="Wedler H."/>
            <person name="Winnett E."/>
            <person name="Zhong W.-W."/>
            <person name="Zollner A."/>
            <person name="Vo D.H."/>
            <person name="Hani J."/>
        </authorList>
    </citation>
    <scope>NUCLEOTIDE SEQUENCE [LARGE SCALE GENOMIC DNA]</scope>
    <source>
        <strain>ATCC 204508 / S288c</strain>
    </source>
</reference>
<reference key="2">
    <citation type="journal article" date="2014" name="G3 (Bethesda)">
        <title>The reference genome sequence of Saccharomyces cerevisiae: Then and now.</title>
        <authorList>
            <person name="Engel S.R."/>
            <person name="Dietrich F.S."/>
            <person name="Fisk D.G."/>
            <person name="Binkley G."/>
            <person name="Balakrishnan R."/>
            <person name="Costanzo M.C."/>
            <person name="Dwight S.S."/>
            <person name="Hitz B.C."/>
            <person name="Karra K."/>
            <person name="Nash R.S."/>
            <person name="Weng S."/>
            <person name="Wong E.D."/>
            <person name="Lloyd P."/>
            <person name="Skrzypek M.S."/>
            <person name="Miyasato S.R."/>
            <person name="Simison M."/>
            <person name="Cherry J.M."/>
        </authorList>
    </citation>
    <scope>GENOME REANNOTATION</scope>
    <source>
        <strain>ATCC 204508 / S288c</strain>
    </source>
</reference>
<reference key="3">
    <citation type="journal article" date="2007" name="Genome Res.">
        <title>Approaching a complete repository of sequence-verified protein-encoding clones for Saccharomyces cerevisiae.</title>
        <authorList>
            <person name="Hu Y."/>
            <person name="Rolfs A."/>
            <person name="Bhullar B."/>
            <person name="Murthy T.V.S."/>
            <person name="Zhu C."/>
            <person name="Berger M.F."/>
            <person name="Camargo A.A."/>
            <person name="Kelley F."/>
            <person name="McCarron S."/>
            <person name="Jepson D."/>
            <person name="Richardson A."/>
            <person name="Raphael J."/>
            <person name="Moreira D."/>
            <person name="Taycher E."/>
            <person name="Zuo D."/>
            <person name="Mohr S."/>
            <person name="Kane M.F."/>
            <person name="Williamson J."/>
            <person name="Simpson A.J.G."/>
            <person name="Bulyk M.L."/>
            <person name="Harlow E."/>
            <person name="Marsischky G."/>
            <person name="Kolodner R.D."/>
            <person name="LaBaer J."/>
        </authorList>
    </citation>
    <scope>NUCLEOTIDE SEQUENCE [GENOMIC DNA]</scope>
    <source>
        <strain>ATCC 204508 / S288c</strain>
    </source>
</reference>
<reference key="4">
    <citation type="journal article" date="2002" name="J. Biol. Chem.">
        <title>New regulators of drug sensitivity in the family of yeast zinc cluster proteins.</title>
        <authorList>
            <person name="Akache B."/>
            <person name="Turcotte B."/>
        </authorList>
    </citation>
    <scope>FUNCTION</scope>
</reference>
<reference key="5">
    <citation type="journal article" date="2003" name="Mol. Cell. Biol.">
        <title>Rds3p is required for stable U2 snRNP recruitment to the splicing apparatus.</title>
        <authorList>
            <person name="Wang Q."/>
            <person name="Rymond B.C."/>
        </authorList>
    </citation>
    <scope>FUNCTION</scope>
    <scope>SUBUNIT</scope>
    <scope>SUBCELLULAR LOCATION</scope>
</reference>
<accession>Q06835</accession>
<accession>D6W493</accession>
<keyword id="KW-0002">3D-structure</keyword>
<keyword id="KW-0507">mRNA processing</keyword>
<keyword id="KW-0508">mRNA splicing</keyword>
<keyword id="KW-0539">Nucleus</keyword>
<keyword id="KW-1185">Reference proteome</keyword>
<keyword id="KW-0747">Spliceosome</keyword>
<organism>
    <name type="scientific">Saccharomyces cerevisiae (strain ATCC 204508 / S288c)</name>
    <name type="common">Baker's yeast</name>
    <dbReference type="NCBI Taxonomy" id="559292"/>
    <lineage>
        <taxon>Eukaryota</taxon>
        <taxon>Fungi</taxon>
        <taxon>Dikarya</taxon>
        <taxon>Ascomycota</taxon>
        <taxon>Saccharomycotina</taxon>
        <taxon>Saccharomycetes</taxon>
        <taxon>Saccharomycetales</taxon>
        <taxon>Saccharomycetaceae</taxon>
        <taxon>Saccharomyces</taxon>
    </lineage>
</organism>
<name>RDS3_YEAST</name>
<dbReference type="EMBL" id="U51033">
    <property type="protein sequence ID" value="AAB68140.1"/>
    <property type="molecule type" value="Genomic_DNA"/>
</dbReference>
<dbReference type="EMBL" id="AY693180">
    <property type="protein sequence ID" value="AAT93199.1"/>
    <property type="molecule type" value="Genomic_DNA"/>
</dbReference>
<dbReference type="EMBL" id="BK006949">
    <property type="protein sequence ID" value="DAA11509.1"/>
    <property type="molecule type" value="Genomic_DNA"/>
</dbReference>
<dbReference type="PIR" id="S69077">
    <property type="entry name" value="S69077"/>
</dbReference>
<dbReference type="RefSeq" id="NP_015419.1">
    <property type="nucleotide sequence ID" value="NM_001184191.1"/>
</dbReference>
<dbReference type="PDB" id="2K0A">
    <property type="method" value="NMR"/>
    <property type="chains" value="A=2-107"/>
</dbReference>
<dbReference type="PDB" id="5GM6">
    <property type="method" value="EM"/>
    <property type="resolution" value="3.50 A"/>
    <property type="chains" value="J=1-107"/>
</dbReference>
<dbReference type="PDB" id="5LQW">
    <property type="method" value="EM"/>
    <property type="resolution" value="5.80 A"/>
    <property type="chains" value="Y=1-107"/>
</dbReference>
<dbReference type="PDB" id="5NRL">
    <property type="method" value="EM"/>
    <property type="resolution" value="7.20 A"/>
    <property type="chains" value="S=1-107"/>
</dbReference>
<dbReference type="PDB" id="5ZWM">
    <property type="method" value="EM"/>
    <property type="resolution" value="3.40 A"/>
    <property type="chains" value="5=1-107"/>
</dbReference>
<dbReference type="PDB" id="5ZWO">
    <property type="method" value="EM"/>
    <property type="resolution" value="3.90 A"/>
    <property type="chains" value="5=1-107"/>
</dbReference>
<dbReference type="PDB" id="6G90">
    <property type="method" value="EM"/>
    <property type="resolution" value="4.00 A"/>
    <property type="chains" value="S=1-107"/>
</dbReference>
<dbReference type="PDB" id="7OQB">
    <property type="method" value="EM"/>
    <property type="resolution" value="9.00 A"/>
    <property type="chains" value="S=1-107"/>
</dbReference>
<dbReference type="PDB" id="7OQE">
    <property type="method" value="EM"/>
    <property type="resolution" value="5.90 A"/>
    <property type="chains" value="S=1-107"/>
</dbReference>
<dbReference type="PDBsum" id="2K0A"/>
<dbReference type="PDBsum" id="5GM6"/>
<dbReference type="PDBsum" id="5LQW"/>
<dbReference type="PDBsum" id="5NRL"/>
<dbReference type="PDBsum" id="5ZWM"/>
<dbReference type="PDBsum" id="5ZWO"/>
<dbReference type="PDBsum" id="6G90"/>
<dbReference type="PDBsum" id="7OQB"/>
<dbReference type="PDBsum" id="7OQE"/>
<dbReference type="BMRB" id="Q06835"/>
<dbReference type="EMDB" id="EMD-13028"/>
<dbReference type="EMDB" id="EMD-13033"/>
<dbReference type="EMDB" id="EMD-3683"/>
<dbReference type="EMDB" id="EMD-4364"/>
<dbReference type="EMDB" id="EMD-6972"/>
<dbReference type="EMDB" id="EMD-6974"/>
<dbReference type="EMDB" id="EMD-9524"/>
<dbReference type="SMR" id="Q06835"/>
<dbReference type="BioGRID" id="36262">
    <property type="interactions" value="245"/>
</dbReference>
<dbReference type="ComplexPortal" id="CPX-1647">
    <property type="entry name" value="SF3B complex"/>
</dbReference>
<dbReference type="ComplexPortal" id="CPX-26">
    <property type="entry name" value="U2 small nuclear ribonucleoprotein complex"/>
</dbReference>
<dbReference type="DIP" id="DIP-3822N"/>
<dbReference type="FunCoup" id="Q06835">
    <property type="interactions" value="1131"/>
</dbReference>
<dbReference type="IntAct" id="Q06835">
    <property type="interactions" value="35"/>
</dbReference>
<dbReference type="STRING" id="4932.YPR094W"/>
<dbReference type="iPTMnet" id="Q06835"/>
<dbReference type="PaxDb" id="4932-YPR094W"/>
<dbReference type="PeptideAtlas" id="Q06835"/>
<dbReference type="EnsemblFungi" id="YPR094W_mRNA">
    <property type="protein sequence ID" value="YPR094W"/>
    <property type="gene ID" value="YPR094W"/>
</dbReference>
<dbReference type="GeneID" id="856209"/>
<dbReference type="KEGG" id="sce:YPR094W"/>
<dbReference type="AGR" id="SGD:S000006298"/>
<dbReference type="SGD" id="S000006298">
    <property type="gene designation" value="RDS3"/>
</dbReference>
<dbReference type="VEuPathDB" id="FungiDB:YPR094W"/>
<dbReference type="eggNOG" id="KOG1705">
    <property type="taxonomic scope" value="Eukaryota"/>
</dbReference>
<dbReference type="GeneTree" id="ENSGT00390000018518"/>
<dbReference type="HOGENOM" id="CLU_110369_1_1_1"/>
<dbReference type="InParanoid" id="Q06835"/>
<dbReference type="OMA" id="AYYCWEC"/>
<dbReference type="OrthoDB" id="10248186at2759"/>
<dbReference type="BioCyc" id="YEAST:G3O-34235-MONOMER"/>
<dbReference type="BioGRID-ORCS" id="856209">
    <property type="hits" value="5 hits in 10 CRISPR screens"/>
</dbReference>
<dbReference type="EvolutionaryTrace" id="Q06835"/>
<dbReference type="PRO" id="PR:Q06835"/>
<dbReference type="Proteomes" id="UP000002311">
    <property type="component" value="Chromosome XVI"/>
</dbReference>
<dbReference type="RNAct" id="Q06835">
    <property type="molecule type" value="protein"/>
</dbReference>
<dbReference type="GO" id="GO:0005634">
    <property type="term" value="C:nucleus"/>
    <property type="evidence" value="ECO:0000303"/>
    <property type="project" value="ComplexPortal"/>
</dbReference>
<dbReference type="GO" id="GO:0071011">
    <property type="term" value="C:precatalytic spliceosome"/>
    <property type="evidence" value="ECO:0000318"/>
    <property type="project" value="GO_Central"/>
</dbReference>
<dbReference type="GO" id="GO:0005681">
    <property type="term" value="C:spliceosomal complex"/>
    <property type="evidence" value="ECO:0000303"/>
    <property type="project" value="ComplexPortal"/>
</dbReference>
<dbReference type="GO" id="GO:0005686">
    <property type="term" value="C:U2 snRNP"/>
    <property type="evidence" value="ECO:0000314"/>
    <property type="project" value="SGD"/>
</dbReference>
<dbReference type="GO" id="GO:0005684">
    <property type="term" value="C:U2-type spliceosomal complex"/>
    <property type="evidence" value="ECO:0000353"/>
    <property type="project" value="ComplexPortal"/>
</dbReference>
<dbReference type="GO" id="GO:0000398">
    <property type="term" value="P:mRNA splicing, via spliceosome"/>
    <property type="evidence" value="ECO:0000315"/>
    <property type="project" value="SGD"/>
</dbReference>
<dbReference type="GO" id="GO:0009410">
    <property type="term" value="P:response to xenobiotic stimulus"/>
    <property type="evidence" value="ECO:0000315"/>
    <property type="project" value="SGD"/>
</dbReference>
<dbReference type="GO" id="GO:0000245">
    <property type="term" value="P:spliceosomal complex assembly"/>
    <property type="evidence" value="ECO:0000314"/>
    <property type="project" value="SGD"/>
</dbReference>
<dbReference type="GO" id="GO:1903241">
    <property type="term" value="P:U2-type prespliceosome assembly"/>
    <property type="evidence" value="ECO:0000303"/>
    <property type="project" value="ComplexPortal"/>
</dbReference>
<dbReference type="InterPro" id="IPR005345">
    <property type="entry name" value="PHF5"/>
</dbReference>
<dbReference type="PANTHER" id="PTHR13120">
    <property type="entry name" value="PHD FINGER-LIKE DOMAIN-CONTAINING PROTEIN 5A"/>
    <property type="match status" value="1"/>
</dbReference>
<dbReference type="Pfam" id="PF03660">
    <property type="entry name" value="PHF5"/>
    <property type="match status" value="1"/>
</dbReference>
<dbReference type="PIRSF" id="PIRSF016468">
    <property type="entry name" value="PHF5"/>
    <property type="match status" value="1"/>
</dbReference>
<feature type="chain" id="PRO_0000218722" description="Pre-mRNA-splicing factor RDS3">
    <location>
        <begin position="1"/>
        <end position="107"/>
    </location>
</feature>
<feature type="strand" evidence="4">
    <location>
        <begin position="15"/>
        <end position="19"/>
    </location>
</feature>
<feature type="helix" evidence="4">
    <location>
        <begin position="24"/>
        <end position="26"/>
    </location>
</feature>
<feature type="turn" evidence="4">
    <location>
        <begin position="31"/>
        <end position="33"/>
    </location>
</feature>
<feature type="strand" evidence="4">
    <location>
        <begin position="44"/>
        <end position="46"/>
    </location>
</feature>
<feature type="helix" evidence="4">
    <location>
        <begin position="47"/>
        <end position="50"/>
    </location>
</feature>
<feature type="turn" evidence="4">
    <location>
        <begin position="59"/>
        <end position="61"/>
    </location>
</feature>
<feature type="strand" evidence="4">
    <location>
        <begin position="62"/>
        <end position="65"/>
    </location>
</feature>
<feature type="helix" evidence="4">
    <location>
        <begin position="74"/>
        <end position="79"/>
    </location>
</feature>
<evidence type="ECO:0000269" key="1">
    <source>
    </source>
</evidence>
<evidence type="ECO:0000269" key="2">
    <source>
    </source>
</evidence>
<evidence type="ECO:0000305" key="3"/>
<evidence type="ECO:0007829" key="4">
    <source>
        <dbReference type="PDB" id="2K0A"/>
    </source>
</evidence>
<gene>
    <name type="primary">RDS3</name>
    <name type="ordered locus">YPR094W</name>
    <name type="ORF">P9513.2</name>
</gene>